<accession>Q6GID8</accession>
<proteinExistence type="inferred from homology"/>
<dbReference type="EMBL" id="BX571856">
    <property type="protein sequence ID" value="CAG39918.1"/>
    <property type="molecule type" value="Genomic_DNA"/>
</dbReference>
<dbReference type="RefSeq" id="WP_000402803.1">
    <property type="nucleotide sequence ID" value="NC_002952.2"/>
</dbReference>
<dbReference type="SMR" id="Q6GID8"/>
<dbReference type="GeneID" id="98345271"/>
<dbReference type="KEGG" id="sar:SAR0912"/>
<dbReference type="HOGENOM" id="CLU_082058_3_1_9"/>
<dbReference type="Proteomes" id="UP000000596">
    <property type="component" value="Chromosome"/>
</dbReference>
<dbReference type="GO" id="GO:0005886">
    <property type="term" value="C:plasma membrane"/>
    <property type="evidence" value="ECO:0007669"/>
    <property type="project" value="UniProtKB-SubCell"/>
</dbReference>
<dbReference type="GO" id="GO:0015297">
    <property type="term" value="F:antiporter activity"/>
    <property type="evidence" value="ECO:0007669"/>
    <property type="project" value="UniProtKB-KW"/>
</dbReference>
<dbReference type="GO" id="GO:0008324">
    <property type="term" value="F:monoatomic cation transmembrane transporter activity"/>
    <property type="evidence" value="ECO:0007669"/>
    <property type="project" value="InterPro"/>
</dbReference>
<dbReference type="GO" id="GO:1902600">
    <property type="term" value="P:proton transmembrane transport"/>
    <property type="evidence" value="ECO:0007669"/>
    <property type="project" value="UniProtKB-KW"/>
</dbReference>
<dbReference type="GO" id="GO:0006814">
    <property type="term" value="P:sodium ion transport"/>
    <property type="evidence" value="ECO:0007669"/>
    <property type="project" value="UniProtKB-KW"/>
</dbReference>
<dbReference type="Gene3D" id="1.10.287.3510">
    <property type="match status" value="1"/>
</dbReference>
<dbReference type="InterPro" id="IPR050601">
    <property type="entry name" value="CPA3_antiporter_subunitC"/>
</dbReference>
<dbReference type="InterPro" id="IPR006673">
    <property type="entry name" value="Mnh_C1_su"/>
</dbReference>
<dbReference type="InterPro" id="IPR039428">
    <property type="entry name" value="NUOK/Mnh_C1-like"/>
</dbReference>
<dbReference type="NCBIfam" id="TIGR00941">
    <property type="entry name" value="2a6301s03"/>
    <property type="match status" value="1"/>
</dbReference>
<dbReference type="NCBIfam" id="NF006372">
    <property type="entry name" value="PRK08600.1"/>
    <property type="match status" value="1"/>
</dbReference>
<dbReference type="NCBIfam" id="NF006573">
    <property type="entry name" value="PRK09094.1"/>
    <property type="match status" value="1"/>
</dbReference>
<dbReference type="NCBIfam" id="NF009303">
    <property type="entry name" value="PRK12660.1"/>
    <property type="match status" value="1"/>
</dbReference>
<dbReference type="PANTHER" id="PTHR34583">
    <property type="entry name" value="ANTIPORTER SUBUNIT MNHC2-RELATED"/>
    <property type="match status" value="1"/>
</dbReference>
<dbReference type="PANTHER" id="PTHR34583:SF2">
    <property type="entry name" value="ANTIPORTER SUBUNIT MNHC2-RELATED"/>
    <property type="match status" value="1"/>
</dbReference>
<dbReference type="Pfam" id="PF00420">
    <property type="entry name" value="Oxidored_q2"/>
    <property type="match status" value="1"/>
</dbReference>
<name>MNHC1_STAAR</name>
<feature type="chain" id="PRO_0000089150" description="Na(+)/H(+) antiporter subunit C1">
    <location>
        <begin position="1"/>
        <end position="113"/>
    </location>
</feature>
<feature type="transmembrane region" description="Helical" evidence="2">
    <location>
        <begin position="4"/>
        <end position="21"/>
    </location>
</feature>
<feature type="transmembrane region" description="Helical" evidence="2">
    <location>
        <begin position="26"/>
        <end position="48"/>
    </location>
</feature>
<feature type="transmembrane region" description="Helical" evidence="2">
    <location>
        <begin position="68"/>
        <end position="90"/>
    </location>
</feature>
<sequence length="113" mass="12293">MEIIMIFVSGILTAISVYLVLSKSLIRIVMGTTLLTHAANLFLITMGGLKHGTVPIYEANVKSYVDPIPQALILTAIVIAFATTAFFLVLAFRTYKELGTDNVESMKGVPEDD</sequence>
<keyword id="KW-0050">Antiport</keyword>
<keyword id="KW-1003">Cell membrane</keyword>
<keyword id="KW-0375">Hydrogen ion transport</keyword>
<keyword id="KW-0406">Ion transport</keyword>
<keyword id="KW-0472">Membrane</keyword>
<keyword id="KW-0915">Sodium</keyword>
<keyword id="KW-0739">Sodium transport</keyword>
<keyword id="KW-0812">Transmembrane</keyword>
<keyword id="KW-1133">Transmembrane helix</keyword>
<keyword id="KW-0813">Transport</keyword>
<evidence type="ECO:0000250" key="1"/>
<evidence type="ECO:0000255" key="2"/>
<evidence type="ECO:0000305" key="3"/>
<reference key="1">
    <citation type="journal article" date="2004" name="Proc. Natl. Acad. Sci. U.S.A.">
        <title>Complete genomes of two clinical Staphylococcus aureus strains: evidence for the rapid evolution of virulence and drug resistance.</title>
        <authorList>
            <person name="Holden M.T.G."/>
            <person name="Feil E.J."/>
            <person name="Lindsay J.A."/>
            <person name="Peacock S.J."/>
            <person name="Day N.P.J."/>
            <person name="Enright M.C."/>
            <person name="Foster T.J."/>
            <person name="Moore C.E."/>
            <person name="Hurst L."/>
            <person name="Atkin R."/>
            <person name="Barron A."/>
            <person name="Bason N."/>
            <person name="Bentley S.D."/>
            <person name="Chillingworth C."/>
            <person name="Chillingworth T."/>
            <person name="Churcher C."/>
            <person name="Clark L."/>
            <person name="Corton C."/>
            <person name="Cronin A."/>
            <person name="Doggett J."/>
            <person name="Dowd L."/>
            <person name="Feltwell T."/>
            <person name="Hance Z."/>
            <person name="Harris B."/>
            <person name="Hauser H."/>
            <person name="Holroyd S."/>
            <person name="Jagels K."/>
            <person name="James K.D."/>
            <person name="Lennard N."/>
            <person name="Line A."/>
            <person name="Mayes R."/>
            <person name="Moule S."/>
            <person name="Mungall K."/>
            <person name="Ormond D."/>
            <person name="Quail M.A."/>
            <person name="Rabbinowitsch E."/>
            <person name="Rutherford K.M."/>
            <person name="Sanders M."/>
            <person name="Sharp S."/>
            <person name="Simmonds M."/>
            <person name="Stevens K."/>
            <person name="Whitehead S."/>
            <person name="Barrell B.G."/>
            <person name="Spratt B.G."/>
            <person name="Parkhill J."/>
        </authorList>
    </citation>
    <scope>NUCLEOTIDE SEQUENCE [LARGE SCALE GENOMIC DNA]</scope>
    <source>
        <strain>MRSA252</strain>
    </source>
</reference>
<gene>
    <name type="primary">mnhC1</name>
    <name type="ordered locus">SAR0912</name>
</gene>
<organism>
    <name type="scientific">Staphylococcus aureus (strain MRSA252)</name>
    <dbReference type="NCBI Taxonomy" id="282458"/>
    <lineage>
        <taxon>Bacteria</taxon>
        <taxon>Bacillati</taxon>
        <taxon>Bacillota</taxon>
        <taxon>Bacilli</taxon>
        <taxon>Bacillales</taxon>
        <taxon>Staphylococcaceae</taxon>
        <taxon>Staphylococcus</taxon>
    </lineage>
</organism>
<comment type="function">
    <text evidence="1">Mnh complex is a Na(+)/H(+) antiporter involved in Na(+) excretion.</text>
</comment>
<comment type="subunit">
    <text evidence="1">May form a heterooligomeric complex that consists of seven subunits: mnhA1, mnhB1, mnhC1, mnhD1, mnhE1, mnhF1 and mnhG1.</text>
</comment>
<comment type="subcellular location">
    <subcellularLocation>
        <location evidence="3">Cell membrane</location>
        <topology evidence="3">Multi-pass membrane protein</topology>
    </subcellularLocation>
</comment>
<comment type="similarity">
    <text evidence="3">Belongs to the CPA3 antiporters (TC 2.A.63) subunit C family.</text>
</comment>
<protein>
    <recommendedName>
        <fullName>Na(+)/H(+) antiporter subunit C1</fullName>
    </recommendedName>
    <alternativeName>
        <fullName>Mnh complex subunit C1</fullName>
    </alternativeName>
</protein>